<keyword id="KW-0315">Glutamine amidotransferase</keyword>
<keyword id="KW-0378">Hydrolase</keyword>
<keyword id="KW-0456">Lyase</keyword>
<keyword id="KW-0663">Pyridoxal phosphate</keyword>
<keyword id="KW-1185">Reference proteome</keyword>
<evidence type="ECO:0000255" key="1">
    <source>
        <dbReference type="HAMAP-Rule" id="MF_01615"/>
    </source>
</evidence>
<proteinExistence type="inferred from homology"/>
<protein>
    <recommendedName>
        <fullName evidence="1">Pyridoxal 5'-phosphate synthase subunit PdxT</fullName>
        <ecNumber evidence="1">4.3.3.6</ecNumber>
    </recommendedName>
    <alternativeName>
        <fullName evidence="1">Pdx2</fullName>
    </alternativeName>
    <alternativeName>
        <fullName evidence="1">Pyridoxal 5'-phosphate synthase glutaminase subunit</fullName>
        <ecNumber evidence="1">3.5.1.2</ecNumber>
    </alternativeName>
</protein>
<name>PDXT_METHJ</name>
<gene>
    <name evidence="1" type="primary">pdxT</name>
    <name type="ordered locus">Mhun_2323</name>
</gene>
<reference key="1">
    <citation type="journal article" date="2016" name="Stand. Genomic Sci.">
        <title>Complete genome sequence of Methanospirillum hungatei type strain JF1.</title>
        <authorList>
            <person name="Gunsalus R.P."/>
            <person name="Cook L.E."/>
            <person name="Crable B."/>
            <person name="Rohlin L."/>
            <person name="McDonald E."/>
            <person name="Mouttaki H."/>
            <person name="Sieber J.R."/>
            <person name="Poweleit N."/>
            <person name="Zhou H."/>
            <person name="Lapidus A.L."/>
            <person name="Daligault H.E."/>
            <person name="Land M."/>
            <person name="Gilna P."/>
            <person name="Ivanova N."/>
            <person name="Kyrpides N."/>
            <person name="Culley D.E."/>
            <person name="McInerney M.J."/>
        </authorList>
    </citation>
    <scope>NUCLEOTIDE SEQUENCE [LARGE SCALE GENOMIC DNA]</scope>
    <source>
        <strain>ATCC 27890 / DSM 864 / NBRC 100397 / JF-1</strain>
    </source>
</reference>
<comment type="function">
    <text evidence="1">Catalyzes the hydrolysis of glutamine to glutamate and ammonia as part of the biosynthesis of pyridoxal 5'-phosphate. The resulting ammonia molecule is channeled to the active site of PdxS.</text>
</comment>
<comment type="catalytic activity">
    <reaction evidence="1">
        <text>aldehydo-D-ribose 5-phosphate + D-glyceraldehyde 3-phosphate + L-glutamine = pyridoxal 5'-phosphate + L-glutamate + phosphate + 3 H2O + H(+)</text>
        <dbReference type="Rhea" id="RHEA:31507"/>
        <dbReference type="ChEBI" id="CHEBI:15377"/>
        <dbReference type="ChEBI" id="CHEBI:15378"/>
        <dbReference type="ChEBI" id="CHEBI:29985"/>
        <dbReference type="ChEBI" id="CHEBI:43474"/>
        <dbReference type="ChEBI" id="CHEBI:58273"/>
        <dbReference type="ChEBI" id="CHEBI:58359"/>
        <dbReference type="ChEBI" id="CHEBI:59776"/>
        <dbReference type="ChEBI" id="CHEBI:597326"/>
        <dbReference type="EC" id="4.3.3.6"/>
    </reaction>
</comment>
<comment type="catalytic activity">
    <reaction evidence="1">
        <text>L-glutamine + H2O = L-glutamate + NH4(+)</text>
        <dbReference type="Rhea" id="RHEA:15889"/>
        <dbReference type="ChEBI" id="CHEBI:15377"/>
        <dbReference type="ChEBI" id="CHEBI:28938"/>
        <dbReference type="ChEBI" id="CHEBI:29985"/>
        <dbReference type="ChEBI" id="CHEBI:58359"/>
        <dbReference type="EC" id="3.5.1.2"/>
    </reaction>
</comment>
<comment type="pathway">
    <text evidence="1">Cofactor biosynthesis; pyridoxal 5'-phosphate biosynthesis.</text>
</comment>
<comment type="subunit">
    <text evidence="1">In the presence of PdxS, forms a dodecamer of heterodimers. Only shows activity in the heterodimer.</text>
</comment>
<comment type="similarity">
    <text evidence="1">Belongs to the glutaminase PdxT/SNO family.</text>
</comment>
<dbReference type="EC" id="4.3.3.6" evidence="1"/>
<dbReference type="EC" id="3.5.1.2" evidence="1"/>
<dbReference type="EMBL" id="CP000254">
    <property type="protein sequence ID" value="ABD42028.1"/>
    <property type="molecule type" value="Genomic_DNA"/>
</dbReference>
<dbReference type="RefSeq" id="WP_011449286.1">
    <property type="nucleotide sequence ID" value="NC_007796.1"/>
</dbReference>
<dbReference type="SMR" id="Q2FTH1"/>
<dbReference type="FunCoup" id="Q2FTH1">
    <property type="interactions" value="118"/>
</dbReference>
<dbReference type="STRING" id="323259.Mhun_2323"/>
<dbReference type="EnsemblBacteria" id="ABD42028">
    <property type="protein sequence ID" value="ABD42028"/>
    <property type="gene ID" value="Mhun_2323"/>
</dbReference>
<dbReference type="GeneID" id="3922065"/>
<dbReference type="KEGG" id="mhu:Mhun_2323"/>
<dbReference type="eggNOG" id="arCOG00034">
    <property type="taxonomic scope" value="Archaea"/>
</dbReference>
<dbReference type="HOGENOM" id="CLU_069674_2_0_2"/>
<dbReference type="InParanoid" id="Q2FTH1"/>
<dbReference type="OrthoDB" id="26717at2157"/>
<dbReference type="UniPathway" id="UPA00245"/>
<dbReference type="Proteomes" id="UP000001941">
    <property type="component" value="Chromosome"/>
</dbReference>
<dbReference type="GO" id="GO:0005829">
    <property type="term" value="C:cytosol"/>
    <property type="evidence" value="ECO:0007669"/>
    <property type="project" value="TreeGrafter"/>
</dbReference>
<dbReference type="GO" id="GO:1903600">
    <property type="term" value="C:glutaminase complex"/>
    <property type="evidence" value="ECO:0007669"/>
    <property type="project" value="TreeGrafter"/>
</dbReference>
<dbReference type="GO" id="GO:0004359">
    <property type="term" value="F:glutaminase activity"/>
    <property type="evidence" value="ECO:0007669"/>
    <property type="project" value="UniProtKB-UniRule"/>
</dbReference>
<dbReference type="GO" id="GO:0036381">
    <property type="term" value="F:pyridoxal 5'-phosphate synthase (glutamine hydrolysing) activity"/>
    <property type="evidence" value="ECO:0007669"/>
    <property type="project" value="UniProtKB-UniRule"/>
</dbReference>
<dbReference type="GO" id="GO:0006543">
    <property type="term" value="P:glutamine catabolic process"/>
    <property type="evidence" value="ECO:0007669"/>
    <property type="project" value="UniProtKB-UniRule"/>
</dbReference>
<dbReference type="GO" id="GO:0042823">
    <property type="term" value="P:pyridoxal phosphate biosynthetic process"/>
    <property type="evidence" value="ECO:0007669"/>
    <property type="project" value="UniProtKB-UniRule"/>
</dbReference>
<dbReference type="GO" id="GO:0008614">
    <property type="term" value="P:pyridoxine metabolic process"/>
    <property type="evidence" value="ECO:0007669"/>
    <property type="project" value="TreeGrafter"/>
</dbReference>
<dbReference type="CDD" id="cd01749">
    <property type="entry name" value="GATase1_PB"/>
    <property type="match status" value="1"/>
</dbReference>
<dbReference type="FunFam" id="3.40.50.880:FF:000010">
    <property type="entry name" value="uncharacterized protein LOC100176842 isoform X2"/>
    <property type="match status" value="1"/>
</dbReference>
<dbReference type="Gene3D" id="3.40.50.880">
    <property type="match status" value="1"/>
</dbReference>
<dbReference type="HAMAP" id="MF_01615">
    <property type="entry name" value="PdxT"/>
    <property type="match status" value="1"/>
</dbReference>
<dbReference type="InterPro" id="IPR029062">
    <property type="entry name" value="Class_I_gatase-like"/>
</dbReference>
<dbReference type="InterPro" id="IPR002161">
    <property type="entry name" value="PdxT/SNO"/>
</dbReference>
<dbReference type="InterPro" id="IPR021196">
    <property type="entry name" value="PdxT/SNO_CS"/>
</dbReference>
<dbReference type="NCBIfam" id="TIGR03800">
    <property type="entry name" value="PLP_synth_Pdx2"/>
    <property type="match status" value="1"/>
</dbReference>
<dbReference type="PANTHER" id="PTHR31559">
    <property type="entry name" value="PYRIDOXAL 5'-PHOSPHATE SYNTHASE SUBUNIT SNO"/>
    <property type="match status" value="1"/>
</dbReference>
<dbReference type="PANTHER" id="PTHR31559:SF0">
    <property type="entry name" value="PYRIDOXAL 5'-PHOSPHATE SYNTHASE SUBUNIT SNO1-RELATED"/>
    <property type="match status" value="1"/>
</dbReference>
<dbReference type="Pfam" id="PF01174">
    <property type="entry name" value="SNO"/>
    <property type="match status" value="1"/>
</dbReference>
<dbReference type="PIRSF" id="PIRSF005639">
    <property type="entry name" value="Glut_amidoT_SNO"/>
    <property type="match status" value="1"/>
</dbReference>
<dbReference type="SUPFAM" id="SSF52317">
    <property type="entry name" value="Class I glutamine amidotransferase-like"/>
    <property type="match status" value="1"/>
</dbReference>
<dbReference type="PROSITE" id="PS01236">
    <property type="entry name" value="PDXT_SNO_1"/>
    <property type="match status" value="1"/>
</dbReference>
<dbReference type="PROSITE" id="PS51130">
    <property type="entry name" value="PDXT_SNO_2"/>
    <property type="match status" value="1"/>
</dbReference>
<sequence length="196" mass="21364">MAGNAAVGVLALQGDVSEHISAFESAIQNLGLNIPVVPVRKAEQILDLMALAIPGGESTTIMRLIEKNGMRNIIQNFKGGIFATCAGMVVSARDLINETRFTPLDLLDITVNRNAFGRQRESFEADLQISGFDTPFHAIFIRAPVITRAGPDVTILAEIPQGIVAAKKGKKLILSFHPEISHDLRMHEYFLKDMLG</sequence>
<feature type="chain" id="PRO_0000255823" description="Pyridoxal 5'-phosphate synthase subunit PdxT">
    <location>
        <begin position="1"/>
        <end position="196"/>
    </location>
</feature>
<feature type="active site" description="Nucleophile" evidence="1">
    <location>
        <position position="85"/>
    </location>
</feature>
<feature type="active site" description="Charge relay system" evidence="1">
    <location>
        <position position="177"/>
    </location>
</feature>
<feature type="active site" description="Charge relay system" evidence="1">
    <location>
        <position position="179"/>
    </location>
</feature>
<feature type="binding site" evidence="1">
    <location>
        <begin position="56"/>
        <end position="58"/>
    </location>
    <ligand>
        <name>L-glutamine</name>
        <dbReference type="ChEBI" id="CHEBI:58359"/>
    </ligand>
</feature>
<feature type="binding site" evidence="1">
    <location>
        <position position="113"/>
    </location>
    <ligand>
        <name>L-glutamine</name>
        <dbReference type="ChEBI" id="CHEBI:58359"/>
    </ligand>
</feature>
<feature type="binding site" evidence="1">
    <location>
        <begin position="141"/>
        <end position="142"/>
    </location>
    <ligand>
        <name>L-glutamine</name>
        <dbReference type="ChEBI" id="CHEBI:58359"/>
    </ligand>
</feature>
<organism>
    <name type="scientific">Methanospirillum hungatei JF-1 (strain ATCC 27890 / DSM 864 / NBRC 100397 / JF-1)</name>
    <dbReference type="NCBI Taxonomy" id="323259"/>
    <lineage>
        <taxon>Archaea</taxon>
        <taxon>Methanobacteriati</taxon>
        <taxon>Methanobacteriota</taxon>
        <taxon>Stenosarchaea group</taxon>
        <taxon>Methanomicrobia</taxon>
        <taxon>Methanomicrobiales</taxon>
        <taxon>Methanospirillaceae</taxon>
        <taxon>Methanospirillum</taxon>
    </lineage>
</organism>
<accession>Q2FTH1</accession>